<organism>
    <name type="scientific">Gloeobacter violaceus (strain ATCC 29082 / PCC 7421)</name>
    <dbReference type="NCBI Taxonomy" id="251221"/>
    <lineage>
        <taxon>Bacteria</taxon>
        <taxon>Bacillati</taxon>
        <taxon>Cyanobacteriota</taxon>
        <taxon>Cyanophyceae</taxon>
        <taxon>Gloeobacterales</taxon>
        <taxon>Gloeobacteraceae</taxon>
        <taxon>Gloeobacter</taxon>
    </lineage>
</organism>
<feature type="chain" id="PRO_0000152288" description="Sugar fermentation stimulation protein homolog">
    <location>
        <begin position="1"/>
        <end position="236"/>
    </location>
</feature>
<name>SFSA_GLOVI</name>
<reference key="1">
    <citation type="journal article" date="2003" name="DNA Res.">
        <title>Complete genome structure of Gloeobacter violaceus PCC 7421, a cyanobacterium that lacks thylakoids.</title>
        <authorList>
            <person name="Nakamura Y."/>
            <person name="Kaneko T."/>
            <person name="Sato S."/>
            <person name="Mimuro M."/>
            <person name="Miyashita H."/>
            <person name="Tsuchiya T."/>
            <person name="Sasamoto S."/>
            <person name="Watanabe A."/>
            <person name="Kawashima K."/>
            <person name="Kishida Y."/>
            <person name="Kiyokawa C."/>
            <person name="Kohara M."/>
            <person name="Matsumoto M."/>
            <person name="Matsuno A."/>
            <person name="Nakazaki N."/>
            <person name="Shimpo S."/>
            <person name="Takeuchi C."/>
            <person name="Yamada M."/>
            <person name="Tabata S."/>
        </authorList>
    </citation>
    <scope>NUCLEOTIDE SEQUENCE [LARGE SCALE GENOMIC DNA]</scope>
    <source>
        <strain>ATCC 29082 / PCC 7421</strain>
    </source>
</reference>
<keyword id="KW-1185">Reference proteome</keyword>
<dbReference type="EMBL" id="BA000045">
    <property type="protein sequence ID" value="BAC89675.1"/>
    <property type="molecule type" value="Genomic_DNA"/>
</dbReference>
<dbReference type="RefSeq" id="NP_924680.1">
    <property type="nucleotide sequence ID" value="NC_005125.1"/>
</dbReference>
<dbReference type="RefSeq" id="WP_011141732.1">
    <property type="nucleotide sequence ID" value="NC_005125.1"/>
</dbReference>
<dbReference type="SMR" id="Q7NJU8"/>
<dbReference type="STRING" id="251221.gene:10759225"/>
<dbReference type="EnsemblBacteria" id="BAC89675">
    <property type="protein sequence ID" value="BAC89675"/>
    <property type="gene ID" value="BAC89675"/>
</dbReference>
<dbReference type="KEGG" id="gvi:gll1734"/>
<dbReference type="PATRIC" id="fig|251221.4.peg.1762"/>
<dbReference type="eggNOG" id="COG1489">
    <property type="taxonomic scope" value="Bacteria"/>
</dbReference>
<dbReference type="HOGENOM" id="CLU_052299_2_0_3"/>
<dbReference type="InParanoid" id="Q7NJU8"/>
<dbReference type="OrthoDB" id="9802365at2"/>
<dbReference type="PhylomeDB" id="Q7NJU8"/>
<dbReference type="Proteomes" id="UP000000557">
    <property type="component" value="Chromosome"/>
</dbReference>
<dbReference type="GO" id="GO:0003677">
    <property type="term" value="F:DNA binding"/>
    <property type="evidence" value="ECO:0000318"/>
    <property type="project" value="GO_Central"/>
</dbReference>
<dbReference type="CDD" id="cd22359">
    <property type="entry name" value="SfsA-like_bacterial"/>
    <property type="match status" value="1"/>
</dbReference>
<dbReference type="Gene3D" id="2.40.50.580">
    <property type="match status" value="1"/>
</dbReference>
<dbReference type="Gene3D" id="3.40.1350.60">
    <property type="match status" value="1"/>
</dbReference>
<dbReference type="HAMAP" id="MF_00095">
    <property type="entry name" value="SfsA"/>
    <property type="match status" value="1"/>
</dbReference>
<dbReference type="InterPro" id="IPR005224">
    <property type="entry name" value="SfsA"/>
</dbReference>
<dbReference type="InterPro" id="IPR040452">
    <property type="entry name" value="SfsA_C"/>
</dbReference>
<dbReference type="InterPro" id="IPR041465">
    <property type="entry name" value="SfsA_N"/>
</dbReference>
<dbReference type="NCBIfam" id="TIGR00230">
    <property type="entry name" value="sfsA"/>
    <property type="match status" value="1"/>
</dbReference>
<dbReference type="PANTHER" id="PTHR30545">
    <property type="entry name" value="SUGAR FERMENTATION STIMULATION PROTEIN A"/>
    <property type="match status" value="1"/>
</dbReference>
<dbReference type="PANTHER" id="PTHR30545:SF2">
    <property type="entry name" value="SUGAR FERMENTATION STIMULATION PROTEIN A"/>
    <property type="match status" value="1"/>
</dbReference>
<dbReference type="Pfam" id="PF03749">
    <property type="entry name" value="SfsA"/>
    <property type="match status" value="1"/>
</dbReference>
<dbReference type="Pfam" id="PF17746">
    <property type="entry name" value="SfsA_N"/>
    <property type="match status" value="1"/>
</dbReference>
<proteinExistence type="inferred from homology"/>
<sequence length="236" mass="26538">MSVLFEYPPLVRGILRRRYKRFFAEVELEDGQLVTAHCPNTGPMRAISTLGSPVYLSRSPDPARKLAYTWEMIDLDGTWVGVNTALPNRIVYRALVERVIAEVGTYRTIRREVPYGSENSRIDFLLTGEGEPLYLEVKSTTLNQGTLALFPDTVTTRGQKHLRELIRLCEHGTRAAMLYFINRGDCTAFSPGDSLDPLYGQLLRAGIERGLLVLPCRFEITPQSVRYLGTASILLA</sequence>
<protein>
    <recommendedName>
        <fullName evidence="1">Sugar fermentation stimulation protein homolog</fullName>
    </recommendedName>
</protein>
<gene>
    <name evidence="1" type="primary">sfsA</name>
    <name type="ordered locus">gll1734</name>
</gene>
<comment type="similarity">
    <text evidence="1">Belongs to the SfsA family.</text>
</comment>
<evidence type="ECO:0000255" key="1">
    <source>
        <dbReference type="HAMAP-Rule" id="MF_00095"/>
    </source>
</evidence>
<accession>Q7NJU8</accession>